<sequence>MSEYKDTLNLPETGFPMRGDLAKREPEMLQRWYQEDLYGAIRQAKKGKKSFVLHDGPPYANGDIHIGHALNKILKDVIIKSKTLSGFDAPYIPGWDCHGLPIELMVEKKVGKPGQKVTAAEFREKCREYAAGQVEGQKESFKRLGILGEWDKPYRTMDFVTEANIIRALGKIADNGHLLKGFKPVHWCTDCGSALAEAEVEYKNKVSPSIDVRFKAADEAAVLAKFGLAAGHEGKGDVSIVIWTTTPWTLPANRAVCLRADLEYVLIQVEGEQPERIIVASELAKSVMDRAGIEHFHNLGFATGADLELVQFQHPFYSFTVPAILGDHVTTDSGTGVVHTAPGHGQEDFAVGQQYGLEVANPVGSNGVYLPDTELFAGQHVFKANDSVLEVLKEKGALLHHHAYEHSYPHCWRHKTPIIFRATPQWFVSMEQAGLREQALTAIKGVHWMPDWGQSRIEGMVAGRPEWCISRQRTWGVPIALFVHKETAELHPNSADLIEKVAQLVEQKGIQAWWDLDTAELLGAEDAANYEKVLDTLDVWFDSGVTHSAVVDARQEFNGAEADMYLEGSDQHRGWFQSSLISSVAMKGKAPYKEVLTHGFVVDGQGRKMSKSIGNVVAPQDVTNKLGADILRLWVASTDYTGEVAVSDEILKRSADAYRRIRNTARFFLANLNGFNPTTDIIPVEDMVALDRWAVGRALAAQQEIIQAYQDYNLHAVVQRLMNFCSIEMGSFYLDVIKDRQYTAKRGGHAQRSCQTALFFIVEALVRWMAPIMSFTADEIWNAMPAQQADGSARDKFVFTTEWFDGLFGLAEGEELNNAFWNDIQKVRGSVNKLLENARNEKLIGGSLQAELVLFADDSLASKLAKLGDELRFVLLTSKAVVKPLAEKSEAAQATDIDGLFVQVNKTEAEKCDRCWHHTPDVGTIAGHTTICGRCVSNVEGEGEVRKFA</sequence>
<accession>Q9KU47</accession>
<organism>
    <name type="scientific">Vibrio cholerae serotype O1 (strain ATCC 39315 / El Tor Inaba N16961)</name>
    <dbReference type="NCBI Taxonomy" id="243277"/>
    <lineage>
        <taxon>Bacteria</taxon>
        <taxon>Pseudomonadati</taxon>
        <taxon>Pseudomonadota</taxon>
        <taxon>Gammaproteobacteria</taxon>
        <taxon>Vibrionales</taxon>
        <taxon>Vibrionaceae</taxon>
        <taxon>Vibrio</taxon>
    </lineage>
</organism>
<proteinExistence type="inferred from homology"/>
<name>SYI_VIBCH</name>
<protein>
    <recommendedName>
        <fullName evidence="1">Isoleucine--tRNA ligase</fullName>
        <ecNumber evidence="1">6.1.1.5</ecNumber>
    </recommendedName>
    <alternativeName>
        <fullName evidence="1">Isoleucyl-tRNA synthetase</fullName>
        <shortName evidence="1">IleRS</shortName>
    </alternativeName>
</protein>
<reference key="1">
    <citation type="journal article" date="2000" name="Nature">
        <title>DNA sequence of both chromosomes of the cholera pathogen Vibrio cholerae.</title>
        <authorList>
            <person name="Heidelberg J.F."/>
            <person name="Eisen J.A."/>
            <person name="Nelson W.C."/>
            <person name="Clayton R.A."/>
            <person name="Gwinn M.L."/>
            <person name="Dodson R.J."/>
            <person name="Haft D.H."/>
            <person name="Hickey E.K."/>
            <person name="Peterson J.D."/>
            <person name="Umayam L.A."/>
            <person name="Gill S.R."/>
            <person name="Nelson K.E."/>
            <person name="Read T.D."/>
            <person name="Tettelin H."/>
            <person name="Richardson D.L."/>
            <person name="Ermolaeva M.D."/>
            <person name="Vamathevan J.J."/>
            <person name="Bass S."/>
            <person name="Qin H."/>
            <person name="Dragoi I."/>
            <person name="Sellers P."/>
            <person name="McDonald L.A."/>
            <person name="Utterback T.R."/>
            <person name="Fleischmann R.D."/>
            <person name="Nierman W.C."/>
            <person name="White O."/>
            <person name="Salzberg S.L."/>
            <person name="Smith H.O."/>
            <person name="Colwell R.R."/>
            <person name="Mekalanos J.J."/>
            <person name="Venter J.C."/>
            <person name="Fraser C.M."/>
        </authorList>
    </citation>
    <scope>NUCLEOTIDE SEQUENCE [LARGE SCALE GENOMIC DNA]</scope>
    <source>
        <strain>ATCC 39315 / El Tor Inaba N16961</strain>
    </source>
</reference>
<keyword id="KW-0030">Aminoacyl-tRNA synthetase</keyword>
<keyword id="KW-0067">ATP-binding</keyword>
<keyword id="KW-0963">Cytoplasm</keyword>
<keyword id="KW-0436">Ligase</keyword>
<keyword id="KW-0479">Metal-binding</keyword>
<keyword id="KW-0547">Nucleotide-binding</keyword>
<keyword id="KW-0648">Protein biosynthesis</keyword>
<keyword id="KW-1185">Reference proteome</keyword>
<keyword id="KW-0862">Zinc</keyword>
<feature type="chain" id="PRO_0000098497" description="Isoleucine--tRNA ligase">
    <location>
        <begin position="1"/>
        <end position="949"/>
    </location>
</feature>
<feature type="short sequence motif" description="'HIGH' region">
    <location>
        <begin position="58"/>
        <end position="68"/>
    </location>
</feature>
<feature type="short sequence motif" description="'KMSKS' region">
    <location>
        <begin position="608"/>
        <end position="612"/>
    </location>
</feature>
<feature type="binding site" evidence="1">
    <location>
        <position position="567"/>
    </location>
    <ligand>
        <name>L-isoleucyl-5'-AMP</name>
        <dbReference type="ChEBI" id="CHEBI:178002"/>
    </ligand>
</feature>
<feature type="binding site" evidence="1">
    <location>
        <position position="611"/>
    </location>
    <ligand>
        <name>ATP</name>
        <dbReference type="ChEBI" id="CHEBI:30616"/>
    </ligand>
</feature>
<feature type="binding site" evidence="1">
    <location>
        <position position="912"/>
    </location>
    <ligand>
        <name>Zn(2+)</name>
        <dbReference type="ChEBI" id="CHEBI:29105"/>
    </ligand>
</feature>
<feature type="binding site" evidence="1">
    <location>
        <position position="915"/>
    </location>
    <ligand>
        <name>Zn(2+)</name>
        <dbReference type="ChEBI" id="CHEBI:29105"/>
    </ligand>
</feature>
<feature type="binding site" evidence="1">
    <location>
        <position position="932"/>
    </location>
    <ligand>
        <name>Zn(2+)</name>
        <dbReference type="ChEBI" id="CHEBI:29105"/>
    </ligand>
</feature>
<feature type="binding site" evidence="1">
    <location>
        <position position="935"/>
    </location>
    <ligand>
        <name>Zn(2+)</name>
        <dbReference type="ChEBI" id="CHEBI:29105"/>
    </ligand>
</feature>
<gene>
    <name evidence="1" type="primary">ileS</name>
    <name type="ordered locus">VC_0682</name>
</gene>
<comment type="function">
    <text evidence="1">Catalyzes the attachment of isoleucine to tRNA(Ile). As IleRS can inadvertently accommodate and process structurally similar amino acids such as valine, to avoid such errors it has two additional distinct tRNA(Ile)-dependent editing activities. One activity is designated as 'pretransfer' editing and involves the hydrolysis of activated Val-AMP. The other activity is designated 'posttransfer' editing and involves deacylation of mischarged Val-tRNA(Ile).</text>
</comment>
<comment type="catalytic activity">
    <reaction evidence="1">
        <text>tRNA(Ile) + L-isoleucine + ATP = L-isoleucyl-tRNA(Ile) + AMP + diphosphate</text>
        <dbReference type="Rhea" id="RHEA:11060"/>
        <dbReference type="Rhea" id="RHEA-COMP:9666"/>
        <dbReference type="Rhea" id="RHEA-COMP:9695"/>
        <dbReference type="ChEBI" id="CHEBI:30616"/>
        <dbReference type="ChEBI" id="CHEBI:33019"/>
        <dbReference type="ChEBI" id="CHEBI:58045"/>
        <dbReference type="ChEBI" id="CHEBI:78442"/>
        <dbReference type="ChEBI" id="CHEBI:78528"/>
        <dbReference type="ChEBI" id="CHEBI:456215"/>
        <dbReference type="EC" id="6.1.1.5"/>
    </reaction>
</comment>
<comment type="cofactor">
    <cofactor evidence="1">
        <name>Zn(2+)</name>
        <dbReference type="ChEBI" id="CHEBI:29105"/>
    </cofactor>
    <text evidence="1">Binds 1 zinc ion per subunit.</text>
</comment>
<comment type="subunit">
    <text evidence="1">Monomer.</text>
</comment>
<comment type="subcellular location">
    <subcellularLocation>
        <location evidence="1">Cytoplasm</location>
    </subcellularLocation>
</comment>
<comment type="domain">
    <text evidence="1">IleRS has two distinct active sites: one for aminoacylation and one for editing. The misactivated valine is translocated from the active site to the editing site, which sterically excludes the correctly activated isoleucine. The single editing site contains two valyl binding pockets, one specific for each substrate (Val-AMP or Val-tRNA(Ile)).</text>
</comment>
<comment type="similarity">
    <text evidence="1">Belongs to the class-I aminoacyl-tRNA synthetase family. IleS type 1 subfamily.</text>
</comment>
<dbReference type="EC" id="6.1.1.5" evidence="1"/>
<dbReference type="EMBL" id="AE003852">
    <property type="protein sequence ID" value="AAF93847.1"/>
    <property type="molecule type" value="Genomic_DNA"/>
</dbReference>
<dbReference type="PIR" id="D82293">
    <property type="entry name" value="D82293"/>
</dbReference>
<dbReference type="RefSeq" id="NP_230331.1">
    <property type="nucleotide sequence ID" value="NC_002505.1"/>
</dbReference>
<dbReference type="RefSeq" id="WP_000006088.1">
    <property type="nucleotide sequence ID" value="NZ_LT906614.1"/>
</dbReference>
<dbReference type="SMR" id="Q9KU47"/>
<dbReference type="STRING" id="243277.VC_0682"/>
<dbReference type="DNASU" id="2615471"/>
<dbReference type="EnsemblBacteria" id="AAF93847">
    <property type="protein sequence ID" value="AAF93847"/>
    <property type="gene ID" value="VC_0682"/>
</dbReference>
<dbReference type="KEGG" id="vch:VC_0682"/>
<dbReference type="PATRIC" id="fig|243277.26.peg.654"/>
<dbReference type="eggNOG" id="COG0060">
    <property type="taxonomic scope" value="Bacteria"/>
</dbReference>
<dbReference type="HOGENOM" id="CLU_001493_7_0_6"/>
<dbReference type="Proteomes" id="UP000000584">
    <property type="component" value="Chromosome 1"/>
</dbReference>
<dbReference type="GO" id="GO:0005829">
    <property type="term" value="C:cytosol"/>
    <property type="evidence" value="ECO:0000318"/>
    <property type="project" value="GO_Central"/>
</dbReference>
<dbReference type="GO" id="GO:0002161">
    <property type="term" value="F:aminoacyl-tRNA deacylase activity"/>
    <property type="evidence" value="ECO:0007669"/>
    <property type="project" value="InterPro"/>
</dbReference>
<dbReference type="GO" id="GO:0005524">
    <property type="term" value="F:ATP binding"/>
    <property type="evidence" value="ECO:0007669"/>
    <property type="project" value="UniProtKB-UniRule"/>
</dbReference>
<dbReference type="GO" id="GO:0004822">
    <property type="term" value="F:isoleucine-tRNA ligase activity"/>
    <property type="evidence" value="ECO:0000318"/>
    <property type="project" value="GO_Central"/>
</dbReference>
<dbReference type="GO" id="GO:0000049">
    <property type="term" value="F:tRNA binding"/>
    <property type="evidence" value="ECO:0007669"/>
    <property type="project" value="InterPro"/>
</dbReference>
<dbReference type="GO" id="GO:0008270">
    <property type="term" value="F:zinc ion binding"/>
    <property type="evidence" value="ECO:0007669"/>
    <property type="project" value="UniProtKB-UniRule"/>
</dbReference>
<dbReference type="GO" id="GO:0006428">
    <property type="term" value="P:isoleucyl-tRNA aminoacylation"/>
    <property type="evidence" value="ECO:0000318"/>
    <property type="project" value="GO_Central"/>
</dbReference>
<dbReference type="CDD" id="cd07960">
    <property type="entry name" value="Anticodon_Ia_Ile_BEm"/>
    <property type="match status" value="1"/>
</dbReference>
<dbReference type="CDD" id="cd00818">
    <property type="entry name" value="IleRS_core"/>
    <property type="match status" value="1"/>
</dbReference>
<dbReference type="FunFam" id="1.10.730.20:FF:000001">
    <property type="entry name" value="Isoleucine--tRNA ligase"/>
    <property type="match status" value="1"/>
</dbReference>
<dbReference type="FunFam" id="3.40.50.620:FF:000048">
    <property type="entry name" value="Isoleucine--tRNA ligase"/>
    <property type="match status" value="1"/>
</dbReference>
<dbReference type="FunFam" id="3.40.50.620:FF:000168">
    <property type="entry name" value="Isoleucine--tRNA ligase"/>
    <property type="match status" value="1"/>
</dbReference>
<dbReference type="Gene3D" id="1.10.730.20">
    <property type="match status" value="1"/>
</dbReference>
<dbReference type="Gene3D" id="3.40.50.620">
    <property type="entry name" value="HUPs"/>
    <property type="match status" value="2"/>
</dbReference>
<dbReference type="Gene3D" id="1.10.10.830">
    <property type="entry name" value="Ile-tRNA synthetase CP2 domain-like"/>
    <property type="match status" value="1"/>
</dbReference>
<dbReference type="HAMAP" id="MF_02002">
    <property type="entry name" value="Ile_tRNA_synth_type1"/>
    <property type="match status" value="1"/>
</dbReference>
<dbReference type="InterPro" id="IPR001412">
    <property type="entry name" value="aa-tRNA-synth_I_CS"/>
</dbReference>
<dbReference type="InterPro" id="IPR002300">
    <property type="entry name" value="aa-tRNA-synth_Ia"/>
</dbReference>
<dbReference type="InterPro" id="IPR033708">
    <property type="entry name" value="Anticodon_Ile_BEm"/>
</dbReference>
<dbReference type="InterPro" id="IPR002301">
    <property type="entry name" value="Ile-tRNA-ligase"/>
</dbReference>
<dbReference type="InterPro" id="IPR023585">
    <property type="entry name" value="Ile-tRNA-ligase_type1"/>
</dbReference>
<dbReference type="InterPro" id="IPR050081">
    <property type="entry name" value="Ile-tRNA_ligase"/>
</dbReference>
<dbReference type="InterPro" id="IPR013155">
    <property type="entry name" value="M/V/L/I-tRNA-synth_anticd-bd"/>
</dbReference>
<dbReference type="InterPro" id="IPR014729">
    <property type="entry name" value="Rossmann-like_a/b/a_fold"/>
</dbReference>
<dbReference type="InterPro" id="IPR009080">
    <property type="entry name" value="tRNAsynth_Ia_anticodon-bd"/>
</dbReference>
<dbReference type="InterPro" id="IPR009008">
    <property type="entry name" value="Val/Leu/Ile-tRNA-synth_edit"/>
</dbReference>
<dbReference type="InterPro" id="IPR010663">
    <property type="entry name" value="Znf_FPG/IleRS"/>
</dbReference>
<dbReference type="NCBIfam" id="TIGR00392">
    <property type="entry name" value="ileS"/>
    <property type="match status" value="1"/>
</dbReference>
<dbReference type="PANTHER" id="PTHR42765:SF1">
    <property type="entry name" value="ISOLEUCINE--TRNA LIGASE, MITOCHONDRIAL"/>
    <property type="match status" value="1"/>
</dbReference>
<dbReference type="PANTHER" id="PTHR42765">
    <property type="entry name" value="SOLEUCYL-TRNA SYNTHETASE"/>
    <property type="match status" value="1"/>
</dbReference>
<dbReference type="Pfam" id="PF08264">
    <property type="entry name" value="Anticodon_1"/>
    <property type="match status" value="1"/>
</dbReference>
<dbReference type="Pfam" id="PF00133">
    <property type="entry name" value="tRNA-synt_1"/>
    <property type="match status" value="1"/>
</dbReference>
<dbReference type="Pfam" id="PF06827">
    <property type="entry name" value="zf-FPG_IleRS"/>
    <property type="match status" value="1"/>
</dbReference>
<dbReference type="PRINTS" id="PR00984">
    <property type="entry name" value="TRNASYNTHILE"/>
</dbReference>
<dbReference type="SUPFAM" id="SSF47323">
    <property type="entry name" value="Anticodon-binding domain of a subclass of class I aminoacyl-tRNA synthetases"/>
    <property type="match status" value="1"/>
</dbReference>
<dbReference type="SUPFAM" id="SSF52374">
    <property type="entry name" value="Nucleotidylyl transferase"/>
    <property type="match status" value="1"/>
</dbReference>
<dbReference type="SUPFAM" id="SSF50677">
    <property type="entry name" value="ValRS/IleRS/LeuRS editing domain"/>
    <property type="match status" value="1"/>
</dbReference>
<dbReference type="PROSITE" id="PS00178">
    <property type="entry name" value="AA_TRNA_LIGASE_I"/>
    <property type="match status" value="1"/>
</dbReference>
<evidence type="ECO:0000255" key="1">
    <source>
        <dbReference type="HAMAP-Rule" id="MF_02002"/>
    </source>
</evidence>